<protein>
    <recommendedName>
        <fullName>Capsid protein</fullName>
    </recommendedName>
    <alternativeName>
        <fullName>Coat protein</fullName>
    </alternativeName>
</protein>
<name>CAPSD_TBRFV</name>
<accession>A0A0S2SZX3</accession>
<keyword id="KW-0007">Acetylation</keyword>
<keyword id="KW-0167">Capsid protein</keyword>
<keyword id="KW-1139">Helical capsid protein</keyword>
<keyword id="KW-0946">Virion</keyword>
<feature type="initiator methionine" description="Removed; by host" evidence="1">
    <location>
        <position position="1"/>
    </location>
</feature>
<feature type="chain" id="PRO_0000448839" description="Capsid protein" evidence="1">
    <location>
        <begin position="2"/>
        <end position="159"/>
    </location>
</feature>
<feature type="modified residue" description="N-acetylserine; by host" evidence="1">
    <location>
        <position position="2"/>
    </location>
</feature>
<dbReference type="EMBL" id="KT383474">
    <property type="protein sequence ID" value="ALP48479.1"/>
    <property type="molecule type" value="Genomic_RNA"/>
</dbReference>
<dbReference type="EMBL" id="MK133095">
    <property type="protein sequence ID" value="AZQ25023.1"/>
    <property type="molecule type" value="Genomic_RNA"/>
</dbReference>
<dbReference type="EMBL" id="MK319944">
    <property type="protein sequence ID" value="QCI56071.1"/>
    <property type="molecule type" value="Genomic_RNA"/>
</dbReference>
<dbReference type="EMBL" id="MN182533">
    <property type="protein sequence ID" value="QEP52197.1"/>
    <property type="molecule type" value="Genomic_RNA"/>
</dbReference>
<dbReference type="RefSeq" id="YP_009182171.1">
    <property type="nucleotide sequence ID" value="NC_028478.1"/>
</dbReference>
<dbReference type="SMR" id="A0A0S2SZX3"/>
<dbReference type="KEGG" id="vg:26373867"/>
<dbReference type="Proteomes" id="UP000203541">
    <property type="component" value="Segment"/>
</dbReference>
<dbReference type="GO" id="GO:0019029">
    <property type="term" value="C:helical viral capsid"/>
    <property type="evidence" value="ECO:0007669"/>
    <property type="project" value="UniProtKB-KW"/>
</dbReference>
<dbReference type="GO" id="GO:0005198">
    <property type="term" value="F:structural molecule activity"/>
    <property type="evidence" value="ECO:0007669"/>
    <property type="project" value="InterPro"/>
</dbReference>
<dbReference type="Gene3D" id="1.20.120.70">
    <property type="entry name" value="Tobacco mosaic virus-like, coat protein"/>
    <property type="match status" value="1"/>
</dbReference>
<dbReference type="InterPro" id="IPR001337">
    <property type="entry name" value="TMV-like_coat"/>
</dbReference>
<dbReference type="InterPro" id="IPR036417">
    <property type="entry name" value="TMV-like_coat_sf"/>
</dbReference>
<dbReference type="Pfam" id="PF00721">
    <property type="entry name" value="TMV_coat"/>
    <property type="match status" value="1"/>
</dbReference>
<dbReference type="SUPFAM" id="SSF47195">
    <property type="entry name" value="TMV-like viral coat proteins"/>
    <property type="match status" value="1"/>
</dbReference>
<sequence length="159" mass="17535">MSYTIATPSQFVFLSSAWADPIELINLCTNSLGNQFQTQQARTTVQRQFSEVWKPVPQVTVRFPDSGFKVYRYNAVLDPLVTALLGAFDTRNRIIEVENQANPTTAETLDATRRVDDATVAIRSAINNLVVELVKGTGLYNQSTFESASGLQWSSAPAS</sequence>
<comment type="function">
    <text evidence="1">Capsid protein self-assembles to form rod-shaped virions about 18 nm in diameter with a central canal enclosing the viral genomic RNA.</text>
</comment>
<comment type="subcellular location">
    <subcellularLocation>
        <location evidence="1">Virion</location>
    </subcellularLocation>
</comment>
<comment type="similarity">
    <text evidence="2">Belongs to the virgaviridae capsid protein family.</text>
</comment>
<proteinExistence type="inferred from homology"/>
<reference key="1">
    <citation type="journal article" date="2016" name="Arch. Virol.">
        <title>A new tobamovirus infecting tomato crops in Jordan.</title>
        <authorList>
            <person name="Salem N."/>
            <person name="Mansour A."/>
            <person name="Ciuffo M."/>
            <person name="Falk B.W."/>
            <person name="Turina M."/>
        </authorList>
    </citation>
    <scope>NUCLEOTIDE SEQUENCE [LARGE SCALE GENOMIC DNA]</scope>
</reference>
<organism>
    <name type="scientific">Tomato brown rugose fruit virus (isolate TOBRFV/Tomato/Jordan/Tom1-Jo/2015)</name>
    <name type="common">ToBRFV</name>
    <dbReference type="NCBI Taxonomy" id="2654645"/>
    <lineage>
        <taxon>Viruses</taxon>
        <taxon>Riboviria</taxon>
        <taxon>Orthornavirae</taxon>
        <taxon>Kitrinoviricota</taxon>
        <taxon>Alsuviricetes</taxon>
        <taxon>Martellivirales</taxon>
        <taxon>Virgaviridae</taxon>
        <taxon>Tobamovirus</taxon>
        <taxon>Tomato brown rugose fruit virus</taxon>
    </lineage>
</organism>
<gene>
    <name type="primary">CP</name>
</gene>
<organismHost>
    <name type="scientific">Solanum lycopersicum</name>
    <name type="common">Tomato</name>
    <name type="synonym">Lycopersicon esculentum</name>
    <dbReference type="NCBI Taxonomy" id="4081"/>
</organismHost>
<evidence type="ECO:0000250" key="1">
    <source>
        <dbReference type="UniProtKB" id="P69687"/>
    </source>
</evidence>
<evidence type="ECO:0000305" key="2"/>